<reference key="1">
    <citation type="journal article" date="1986" name="Gene">
        <title>Organization and expression of the transforming region from the European elk papillomavirus (EEPV).</title>
        <authorList>
            <person name="Ahola H."/>
            <person name="Bergman P."/>
            <person name="Stroem A.C."/>
            <person name="Moreno-Lopez J."/>
            <person name="Petterson U."/>
        </authorList>
    </citation>
    <scope>NUCLEOTIDE SEQUENCE [GENOMIC DNA]</scope>
</reference>
<protein>
    <recommendedName>
        <fullName evidence="1">Regulatory protein E2</fullName>
    </recommendedName>
</protein>
<feature type="chain" id="PRO_0000133247" description="Regulatory protein E2">
    <location>
        <begin position="1"/>
        <end position="415"/>
    </location>
</feature>
<feature type="region of interest" description="Transactivation domain" evidence="1">
    <location>
        <begin position="1"/>
        <end position="205"/>
    </location>
</feature>
<feature type="region of interest" description="Disordered" evidence="2">
    <location>
        <begin position="221"/>
        <end position="313"/>
    </location>
</feature>
<feature type="region of interest" description="DNA-binding domain" evidence="1">
    <location>
        <begin position="330"/>
        <end position="415"/>
    </location>
</feature>
<feature type="compositionally biased region" description="Basic and acidic residues" evidence="2">
    <location>
        <begin position="222"/>
        <end position="235"/>
    </location>
</feature>
<feature type="compositionally biased region" description="Low complexity" evidence="2">
    <location>
        <begin position="267"/>
        <end position="287"/>
    </location>
</feature>
<keyword id="KW-0010">Activator</keyword>
<keyword id="KW-0235">DNA replication</keyword>
<keyword id="KW-0238">DNA-binding</keyword>
<keyword id="KW-0244">Early protein</keyword>
<keyword id="KW-1048">Host nucleus</keyword>
<keyword id="KW-0597">Phosphoprotein</keyword>
<keyword id="KW-1185">Reference proteome</keyword>
<keyword id="KW-0678">Repressor</keyword>
<keyword id="KW-0804">Transcription</keyword>
<keyword id="KW-0805">Transcription regulation</keyword>
<accession>P11329</accession>
<name>VE2_PAPVE</name>
<organism>
    <name type="scientific">European elk papillomavirus</name>
    <name type="common">EEPV</name>
    <dbReference type="NCBI Taxonomy" id="2885846"/>
    <lineage>
        <taxon>Viruses</taxon>
        <taxon>Monodnaviria</taxon>
        <taxon>Shotokuvirae</taxon>
        <taxon>Cossaviricota</taxon>
        <taxon>Papovaviricetes</taxon>
        <taxon>Zurhausenvirales</taxon>
        <taxon>Papillomaviridae</taxon>
        <taxon>Firstpapillomavirinae</taxon>
        <taxon>Deltapapillomavirus</taxon>
        <taxon>Deltapapillomavirus 1</taxon>
    </lineage>
</organism>
<comment type="function">
    <text evidence="1">Plays a role in the initiation of viral DNA replication. A dimer of E2 interacts with a dimer of E1 in order to improve specificity of E1 DNA binding activity. Once the complex recognizes and binds DNA at specific sites, the E2 dimer is removed from DNA. E2 also regulates viral transcription through binding to the E2RE response element (5'-ACCNNNNNNGGT-3') present in multiple copies in the regulatory regions of the viral genome. Activates or represses transcription depending on E2RE's position with regards to proximal promoter elements including the TATA-box. Repression occurs by sterically hindering the assembly of the transcription initiation complex.</text>
</comment>
<comment type="subunit">
    <text evidence="1">Binds DNA as homodimer. Interacts with protein E1; this interaction greatly increases E1 DNA-binding activity. Interacts with protein L1; this interaction enhances E2-dependent replication and transcription activation. Interacts with protein L2; this interaction inhibits E2 transcriptional activity but not DNA replication function E2. Interacts with protein E7; this interaction inhibits E7 oncogenic activity. Interacts with host TAF1; this interaction modulates E2-dependent transcriptional regulation. Interacts with host BRD4; this interaction mediates E2 transcriptional activation function. Additionally, the interaction with host BRD4 on mitotic chromosomes mediates tethering of the viral genome. Interacts with host TOPBP1; this interaction is required for optimal viral DNA replication.</text>
</comment>
<comment type="subcellular location">
    <subcellularLocation>
        <location evidence="1">Host nucleus</location>
    </subcellularLocation>
</comment>
<comment type="PTM">
    <text evidence="1">Phosphorylated.</text>
</comment>
<comment type="similarity">
    <text evidence="1">Belongs to the papillomaviridae E2 protein family.</text>
</comment>
<dbReference type="EMBL" id="M15953">
    <property type="protein sequence ID" value="AAA66854.1"/>
    <property type="molecule type" value="Genomic_DNA"/>
</dbReference>
<dbReference type="PIR" id="D29499">
    <property type="entry name" value="W2WLEP"/>
</dbReference>
<dbReference type="SMR" id="P11329"/>
<dbReference type="KEGG" id="vg:1488990"/>
<dbReference type="Proteomes" id="UP000009060">
    <property type="component" value="Genome"/>
</dbReference>
<dbReference type="GO" id="GO:0042025">
    <property type="term" value="C:host cell nucleus"/>
    <property type="evidence" value="ECO:0007669"/>
    <property type="project" value="UniProtKB-SubCell"/>
</dbReference>
<dbReference type="GO" id="GO:0003677">
    <property type="term" value="F:DNA binding"/>
    <property type="evidence" value="ECO:0007669"/>
    <property type="project" value="UniProtKB-UniRule"/>
</dbReference>
<dbReference type="GO" id="GO:0003700">
    <property type="term" value="F:DNA-binding transcription factor activity"/>
    <property type="evidence" value="ECO:0007669"/>
    <property type="project" value="UniProtKB-UniRule"/>
</dbReference>
<dbReference type="GO" id="GO:0000166">
    <property type="term" value="F:nucleotide binding"/>
    <property type="evidence" value="ECO:0007669"/>
    <property type="project" value="UniProtKB-UniRule"/>
</dbReference>
<dbReference type="GO" id="GO:0006260">
    <property type="term" value="P:DNA replication"/>
    <property type="evidence" value="ECO:0007669"/>
    <property type="project" value="UniProtKB-KW"/>
</dbReference>
<dbReference type="GO" id="GO:0006351">
    <property type="term" value="P:DNA-templated transcription"/>
    <property type="evidence" value="ECO:0007669"/>
    <property type="project" value="UniProtKB-UniRule"/>
</dbReference>
<dbReference type="GO" id="GO:0006275">
    <property type="term" value="P:regulation of DNA replication"/>
    <property type="evidence" value="ECO:0007669"/>
    <property type="project" value="UniProtKB-UniRule"/>
</dbReference>
<dbReference type="GO" id="GO:0039693">
    <property type="term" value="P:viral DNA genome replication"/>
    <property type="evidence" value="ECO:0007669"/>
    <property type="project" value="UniProtKB-UniRule"/>
</dbReference>
<dbReference type="Gene3D" id="3.30.70.330">
    <property type="match status" value="1"/>
</dbReference>
<dbReference type="Gene3D" id="1.10.287.30">
    <property type="entry name" value="E2 (early) protein, N terminal domain, subdomain 1"/>
    <property type="match status" value="1"/>
</dbReference>
<dbReference type="Gene3D" id="2.170.200.10">
    <property type="entry name" value="Papillomavirus E2 early protein domain"/>
    <property type="match status" value="1"/>
</dbReference>
<dbReference type="HAMAP" id="MF_04001">
    <property type="entry name" value="PPV_E2"/>
    <property type="match status" value="1"/>
</dbReference>
<dbReference type="InterPro" id="IPR035975">
    <property type="entry name" value="E2/EBNA1_C_sf"/>
</dbReference>
<dbReference type="InterPro" id="IPR012677">
    <property type="entry name" value="Nucleotide-bd_a/b_plait_sf"/>
</dbReference>
<dbReference type="InterPro" id="IPR000427">
    <property type="entry name" value="Papillomavirus_E2_C"/>
</dbReference>
<dbReference type="InterPro" id="IPR001866">
    <property type="entry name" value="PPV_E2_N"/>
</dbReference>
<dbReference type="InterPro" id="IPR033668">
    <property type="entry name" value="Reg_prot_E2"/>
</dbReference>
<dbReference type="InterPro" id="IPR036050">
    <property type="entry name" value="Regulatory_protein_E2_N"/>
</dbReference>
<dbReference type="InterPro" id="IPR042503">
    <property type="entry name" value="Regulatory_protein_E2_N_1"/>
</dbReference>
<dbReference type="InterPro" id="IPR042504">
    <property type="entry name" value="Regulatory_protein_E2_N_2"/>
</dbReference>
<dbReference type="Pfam" id="PF00511">
    <property type="entry name" value="PPV_E2_C"/>
    <property type="match status" value="1"/>
</dbReference>
<dbReference type="Pfam" id="PF00508">
    <property type="entry name" value="PPV_E2_N"/>
    <property type="match status" value="1"/>
</dbReference>
<dbReference type="SUPFAM" id="SSF51332">
    <property type="entry name" value="E2 regulatory, transactivation domain"/>
    <property type="match status" value="1"/>
</dbReference>
<dbReference type="SUPFAM" id="SSF54957">
    <property type="entry name" value="Viral DNA-binding domain"/>
    <property type="match status" value="1"/>
</dbReference>
<sequence>MKMSAASDHLLAAQETQMQCIEKDSRLLQDHACYWGAVRREKLLLYAARTKGLKTIGCVPVPPCSVTAEQAKQAICMQLIVEELLHSPWAKEPWSLTDLSWERYQAAPKGCLKKGARVVEVEYDGNSSNKTWYTAWSTVYVRGTEEEGWETAVCAADGQGIYYCAGMSSKVYFETFETDARRWSRTGHWTVRDNDVIYHSTFGAPPHSRNDRDCIEGFWSDAGERRGSRGSDTTDRALPYPAARQSPICRPVRTGENRSRAVHRQAPYSAPSSPGSSVGPDSPSESSRQVPLVLLPGPSDPAPPSPDSTDVIAEGDKEPERFSILSKPGGQPCLILSGNGNQAKCYRFRCKRYFREHYQHITTTWWTVGERGSERHGDACVLVTFKDSSQRGVFLKRVPLPPGMRAQALTMIADF</sequence>
<proteinExistence type="inferred from homology"/>
<organismHost>
    <name type="scientific">Cervus elaphus</name>
    <name type="common">Red deer</name>
    <dbReference type="NCBI Taxonomy" id="9860"/>
</organismHost>
<organismHost>
    <name type="scientific">Rangifer tarandus</name>
    <name type="common">Reindeer</name>
    <name type="synonym">Cervus tarandus</name>
    <dbReference type="NCBI Taxonomy" id="9870"/>
</organismHost>
<gene>
    <name evidence="1" type="primary">E2</name>
</gene>
<evidence type="ECO:0000255" key="1">
    <source>
        <dbReference type="HAMAP-Rule" id="MF_04001"/>
    </source>
</evidence>
<evidence type="ECO:0000256" key="2">
    <source>
        <dbReference type="SAM" id="MobiDB-lite"/>
    </source>
</evidence>